<comment type="function">
    <text evidence="1">Catalyzes the reduction of 1-pyrroline-5-carboxylate (PCA) to L-proline.</text>
</comment>
<comment type="catalytic activity">
    <reaction evidence="1">
        <text>L-proline + NADP(+) = (S)-1-pyrroline-5-carboxylate + NADPH + 2 H(+)</text>
        <dbReference type="Rhea" id="RHEA:14109"/>
        <dbReference type="ChEBI" id="CHEBI:15378"/>
        <dbReference type="ChEBI" id="CHEBI:17388"/>
        <dbReference type="ChEBI" id="CHEBI:57783"/>
        <dbReference type="ChEBI" id="CHEBI:58349"/>
        <dbReference type="ChEBI" id="CHEBI:60039"/>
        <dbReference type="EC" id="1.5.1.2"/>
    </reaction>
</comment>
<comment type="catalytic activity">
    <reaction evidence="1">
        <text>L-proline + NAD(+) = (S)-1-pyrroline-5-carboxylate + NADH + 2 H(+)</text>
        <dbReference type="Rhea" id="RHEA:14105"/>
        <dbReference type="ChEBI" id="CHEBI:15378"/>
        <dbReference type="ChEBI" id="CHEBI:17388"/>
        <dbReference type="ChEBI" id="CHEBI:57540"/>
        <dbReference type="ChEBI" id="CHEBI:57945"/>
        <dbReference type="ChEBI" id="CHEBI:60039"/>
        <dbReference type="EC" id="1.5.1.2"/>
    </reaction>
</comment>
<comment type="pathway">
    <text evidence="1">Amino-acid biosynthesis; L-proline biosynthesis; L-proline from L-glutamate 5-semialdehyde: step 1/1.</text>
</comment>
<comment type="subcellular location">
    <subcellularLocation>
        <location evidence="1">Cytoplasm</location>
    </subcellularLocation>
</comment>
<comment type="similarity">
    <text evidence="1">Belongs to the pyrroline-5-carboxylate reductase family.</text>
</comment>
<comment type="sequence caution" evidence="2">
    <conflict type="erroneous initiation">
        <sequence resource="EMBL-CDS" id="BAA09063"/>
    </conflict>
    <text>Extended N-terminus.</text>
</comment>
<reference key="1">
    <citation type="journal article" date="1996" name="Biochim. Biophys. Acta">
        <title>Cloning and sequencing of novel genes from Vibrio alginolyticus that support the growth of K+ uptake-deficient mutant of Escherichia coli.</title>
        <authorList>
            <person name="Nakamura T."/>
            <person name="Katoh Y."/>
            <person name="Shimizu Y."/>
            <person name="Matsuba Y."/>
            <person name="Unemoto T."/>
        </authorList>
    </citation>
    <scope>NUCLEOTIDE SEQUENCE [GENOMIC DNA]</scope>
    <source>
        <strain>138-2</strain>
    </source>
</reference>
<name>P5CR_VIBAL</name>
<protein>
    <recommendedName>
        <fullName evidence="1">Pyrroline-5-carboxylate reductase</fullName>
        <shortName evidence="1">P5C reductase</shortName>
        <shortName evidence="1">P5CR</shortName>
        <ecNumber evidence="1">1.5.1.2</ecNumber>
    </recommendedName>
    <alternativeName>
        <fullName evidence="1">PCA reductase</fullName>
    </alternativeName>
</protein>
<evidence type="ECO:0000255" key="1">
    <source>
        <dbReference type="HAMAP-Rule" id="MF_01925"/>
    </source>
</evidence>
<evidence type="ECO:0000305" key="2"/>
<dbReference type="EC" id="1.5.1.2" evidence="1"/>
<dbReference type="EMBL" id="D50472">
    <property type="protein sequence ID" value="BAA09063.1"/>
    <property type="status" value="ALT_INIT"/>
    <property type="molecule type" value="Genomic_DNA"/>
</dbReference>
<dbReference type="SMR" id="P52053"/>
<dbReference type="STRING" id="663.BAU10_12660"/>
<dbReference type="eggNOG" id="COG0345">
    <property type="taxonomic scope" value="Bacteria"/>
</dbReference>
<dbReference type="UniPathway" id="UPA00098">
    <property type="reaction ID" value="UER00361"/>
</dbReference>
<dbReference type="GO" id="GO:0005737">
    <property type="term" value="C:cytoplasm"/>
    <property type="evidence" value="ECO:0007669"/>
    <property type="project" value="UniProtKB-SubCell"/>
</dbReference>
<dbReference type="GO" id="GO:0004735">
    <property type="term" value="F:pyrroline-5-carboxylate reductase activity"/>
    <property type="evidence" value="ECO:0007669"/>
    <property type="project" value="UniProtKB-UniRule"/>
</dbReference>
<dbReference type="GO" id="GO:0055129">
    <property type="term" value="P:L-proline biosynthetic process"/>
    <property type="evidence" value="ECO:0007669"/>
    <property type="project" value="UniProtKB-UniRule"/>
</dbReference>
<dbReference type="FunFam" id="1.10.3730.10:FF:000001">
    <property type="entry name" value="Pyrroline-5-carboxylate reductase"/>
    <property type="match status" value="1"/>
</dbReference>
<dbReference type="FunFam" id="3.40.50.720:FF:000105">
    <property type="entry name" value="Pyrroline-5-carboxylate reductase"/>
    <property type="match status" value="1"/>
</dbReference>
<dbReference type="Gene3D" id="3.40.50.720">
    <property type="entry name" value="NAD(P)-binding Rossmann-like Domain"/>
    <property type="match status" value="1"/>
</dbReference>
<dbReference type="Gene3D" id="1.10.3730.10">
    <property type="entry name" value="ProC C-terminal domain-like"/>
    <property type="match status" value="1"/>
</dbReference>
<dbReference type="HAMAP" id="MF_01925">
    <property type="entry name" value="P5C_reductase"/>
    <property type="match status" value="1"/>
</dbReference>
<dbReference type="InterPro" id="IPR008927">
    <property type="entry name" value="6-PGluconate_DH-like_C_sf"/>
</dbReference>
<dbReference type="InterPro" id="IPR036291">
    <property type="entry name" value="NAD(P)-bd_dom_sf"/>
</dbReference>
<dbReference type="InterPro" id="IPR028939">
    <property type="entry name" value="P5C_Rdtase_cat_N"/>
</dbReference>
<dbReference type="InterPro" id="IPR053790">
    <property type="entry name" value="P5CR-like_CS"/>
</dbReference>
<dbReference type="InterPro" id="IPR029036">
    <property type="entry name" value="P5CR_dimer"/>
</dbReference>
<dbReference type="InterPro" id="IPR000304">
    <property type="entry name" value="Pyrroline-COOH_reductase"/>
</dbReference>
<dbReference type="NCBIfam" id="TIGR00112">
    <property type="entry name" value="proC"/>
    <property type="match status" value="1"/>
</dbReference>
<dbReference type="PANTHER" id="PTHR11645">
    <property type="entry name" value="PYRROLINE-5-CARBOXYLATE REDUCTASE"/>
    <property type="match status" value="1"/>
</dbReference>
<dbReference type="PANTHER" id="PTHR11645:SF0">
    <property type="entry name" value="PYRROLINE-5-CARBOXYLATE REDUCTASE 3"/>
    <property type="match status" value="1"/>
</dbReference>
<dbReference type="Pfam" id="PF03807">
    <property type="entry name" value="F420_oxidored"/>
    <property type="match status" value="1"/>
</dbReference>
<dbReference type="Pfam" id="PF14748">
    <property type="entry name" value="P5CR_dimer"/>
    <property type="match status" value="1"/>
</dbReference>
<dbReference type="PIRSF" id="PIRSF000193">
    <property type="entry name" value="Pyrrol-5-carb_rd"/>
    <property type="match status" value="1"/>
</dbReference>
<dbReference type="SUPFAM" id="SSF48179">
    <property type="entry name" value="6-phosphogluconate dehydrogenase C-terminal domain-like"/>
    <property type="match status" value="1"/>
</dbReference>
<dbReference type="SUPFAM" id="SSF51735">
    <property type="entry name" value="NAD(P)-binding Rossmann-fold domains"/>
    <property type="match status" value="1"/>
</dbReference>
<dbReference type="PROSITE" id="PS00521">
    <property type="entry name" value="P5CR"/>
    <property type="match status" value="1"/>
</dbReference>
<gene>
    <name evidence="1" type="primary">proC</name>
</gene>
<keyword id="KW-0028">Amino-acid biosynthesis</keyword>
<keyword id="KW-0963">Cytoplasm</keyword>
<keyword id="KW-0521">NADP</keyword>
<keyword id="KW-0560">Oxidoreductase</keyword>
<keyword id="KW-0641">Proline biosynthesis</keyword>
<sequence>MEHKKIAFIGAGNMVRAIVSGLVANGYPAQNITATAPSEARRLPLEQDFGIRTTSDNIQAATEADVVVLSVKPQMMADVCKPLQAIDFTNKLVISIAAGINCSRLDDMLATKLNLVRVMPNTPSQLGLGMSGLFAPIHVTEHDKAFAAELMEAVGKVCWVEQESGINNVIAAAGSAPAYFFLFMEAMQAEAIAQGFDKESARLLVQQAALGAASMVVSNPETELSTLRENVTSKGGTTAEALRTFNEHQLSDIVAKAMQAAVARAEEMEKLF</sequence>
<proteinExistence type="inferred from homology"/>
<organism>
    <name type="scientific">Vibrio alginolyticus</name>
    <dbReference type="NCBI Taxonomy" id="663"/>
    <lineage>
        <taxon>Bacteria</taxon>
        <taxon>Pseudomonadati</taxon>
        <taxon>Pseudomonadota</taxon>
        <taxon>Gammaproteobacteria</taxon>
        <taxon>Vibrionales</taxon>
        <taxon>Vibrionaceae</taxon>
        <taxon>Vibrio</taxon>
    </lineage>
</organism>
<feature type="chain" id="PRO_0000187311" description="Pyrroline-5-carboxylate reductase">
    <location>
        <begin position="1"/>
        <end position="272"/>
    </location>
</feature>
<accession>P52053</accession>